<gene>
    <name evidence="1" type="primary">rplF</name>
    <name type="ordered locus">BH10360</name>
</gene>
<evidence type="ECO:0000255" key="1">
    <source>
        <dbReference type="HAMAP-Rule" id="MF_01365"/>
    </source>
</evidence>
<evidence type="ECO:0000305" key="2"/>
<name>RL6_BARHE</name>
<protein>
    <recommendedName>
        <fullName evidence="1">Large ribosomal subunit protein uL6</fullName>
    </recommendedName>
    <alternativeName>
        <fullName evidence="2">50S ribosomal protein L6</fullName>
    </alternativeName>
</protein>
<sequence length="177" mass="19559">MSRIGKKPISVPSGVTATVEGQLVKAKGPKGELSYLVNDEVLVKLEESFISVSPRDQSKDARSKWGMSRSMIENIFCGVKDGFEKRLEINGVGYRAALQGKDIQLSLGFSHDVIYKVPSGVTVSIPKPTEIVVSGIDKQQVGQVAAEIREYRRPEPYKGKGIKHADERIFRKEGKKK</sequence>
<organism>
    <name type="scientific">Bartonella henselae (strain ATCC 49882 / DSM 28221 / CCUG 30454 / Houston 1)</name>
    <name type="common">Rochalimaea henselae</name>
    <dbReference type="NCBI Taxonomy" id="283166"/>
    <lineage>
        <taxon>Bacteria</taxon>
        <taxon>Pseudomonadati</taxon>
        <taxon>Pseudomonadota</taxon>
        <taxon>Alphaproteobacteria</taxon>
        <taxon>Hyphomicrobiales</taxon>
        <taxon>Bartonellaceae</taxon>
        <taxon>Bartonella</taxon>
    </lineage>
</organism>
<keyword id="KW-0687">Ribonucleoprotein</keyword>
<keyword id="KW-0689">Ribosomal protein</keyword>
<keyword id="KW-0694">RNA-binding</keyword>
<keyword id="KW-0699">rRNA-binding</keyword>
<dbReference type="EMBL" id="BX897699">
    <property type="protein sequence ID" value="CAF27827.1"/>
    <property type="molecule type" value="Genomic_DNA"/>
</dbReference>
<dbReference type="RefSeq" id="WP_011180899.1">
    <property type="nucleotide sequence ID" value="NZ_LRIJ02000001.1"/>
</dbReference>
<dbReference type="SMR" id="Q6G2Y0"/>
<dbReference type="PaxDb" id="283166-BH10360"/>
<dbReference type="EnsemblBacteria" id="CAF27827">
    <property type="protein sequence ID" value="CAF27827"/>
    <property type="gene ID" value="BH10360"/>
</dbReference>
<dbReference type="GeneID" id="92985278"/>
<dbReference type="KEGG" id="bhe:BH10360"/>
<dbReference type="eggNOG" id="COG0097">
    <property type="taxonomic scope" value="Bacteria"/>
</dbReference>
<dbReference type="OrthoDB" id="9805007at2"/>
<dbReference type="Proteomes" id="UP000000421">
    <property type="component" value="Chromosome"/>
</dbReference>
<dbReference type="GO" id="GO:0022625">
    <property type="term" value="C:cytosolic large ribosomal subunit"/>
    <property type="evidence" value="ECO:0007669"/>
    <property type="project" value="TreeGrafter"/>
</dbReference>
<dbReference type="GO" id="GO:0019843">
    <property type="term" value="F:rRNA binding"/>
    <property type="evidence" value="ECO:0007669"/>
    <property type="project" value="UniProtKB-UniRule"/>
</dbReference>
<dbReference type="GO" id="GO:0003735">
    <property type="term" value="F:structural constituent of ribosome"/>
    <property type="evidence" value="ECO:0007669"/>
    <property type="project" value="InterPro"/>
</dbReference>
<dbReference type="GO" id="GO:0002181">
    <property type="term" value="P:cytoplasmic translation"/>
    <property type="evidence" value="ECO:0007669"/>
    <property type="project" value="TreeGrafter"/>
</dbReference>
<dbReference type="FunFam" id="3.90.930.12:FF:000001">
    <property type="entry name" value="50S ribosomal protein L6"/>
    <property type="match status" value="1"/>
</dbReference>
<dbReference type="Gene3D" id="3.90.930.12">
    <property type="entry name" value="Ribosomal protein L6, alpha-beta domain"/>
    <property type="match status" value="2"/>
</dbReference>
<dbReference type="HAMAP" id="MF_01365_B">
    <property type="entry name" value="Ribosomal_uL6_B"/>
    <property type="match status" value="1"/>
</dbReference>
<dbReference type="InterPro" id="IPR000702">
    <property type="entry name" value="Ribosomal_uL6-like"/>
</dbReference>
<dbReference type="InterPro" id="IPR036789">
    <property type="entry name" value="Ribosomal_uL6-like_a/b-dom_sf"/>
</dbReference>
<dbReference type="InterPro" id="IPR020040">
    <property type="entry name" value="Ribosomal_uL6_a/b-dom"/>
</dbReference>
<dbReference type="InterPro" id="IPR019906">
    <property type="entry name" value="Ribosomal_uL6_bac-type"/>
</dbReference>
<dbReference type="InterPro" id="IPR002358">
    <property type="entry name" value="Ribosomal_uL6_CS"/>
</dbReference>
<dbReference type="NCBIfam" id="TIGR03654">
    <property type="entry name" value="L6_bact"/>
    <property type="match status" value="1"/>
</dbReference>
<dbReference type="PANTHER" id="PTHR11655">
    <property type="entry name" value="60S/50S RIBOSOMAL PROTEIN L6/L9"/>
    <property type="match status" value="1"/>
</dbReference>
<dbReference type="PANTHER" id="PTHR11655:SF14">
    <property type="entry name" value="LARGE RIBOSOMAL SUBUNIT PROTEIN UL6M"/>
    <property type="match status" value="1"/>
</dbReference>
<dbReference type="Pfam" id="PF00347">
    <property type="entry name" value="Ribosomal_L6"/>
    <property type="match status" value="2"/>
</dbReference>
<dbReference type="PIRSF" id="PIRSF002162">
    <property type="entry name" value="Ribosomal_L6"/>
    <property type="match status" value="1"/>
</dbReference>
<dbReference type="PRINTS" id="PR00059">
    <property type="entry name" value="RIBOSOMALL6"/>
</dbReference>
<dbReference type="SUPFAM" id="SSF56053">
    <property type="entry name" value="Ribosomal protein L6"/>
    <property type="match status" value="2"/>
</dbReference>
<dbReference type="PROSITE" id="PS00525">
    <property type="entry name" value="RIBOSOMAL_L6_1"/>
    <property type="match status" value="1"/>
</dbReference>
<comment type="function">
    <text evidence="1">This protein binds to the 23S rRNA, and is important in its secondary structure. It is located near the subunit interface in the base of the L7/L12 stalk, and near the tRNA binding site of the peptidyltransferase center.</text>
</comment>
<comment type="subunit">
    <text evidence="1">Part of the 50S ribosomal subunit.</text>
</comment>
<comment type="similarity">
    <text evidence="1">Belongs to the universal ribosomal protein uL6 family.</text>
</comment>
<feature type="chain" id="PRO_0000265216" description="Large ribosomal subunit protein uL6">
    <location>
        <begin position="1"/>
        <end position="177"/>
    </location>
</feature>
<reference key="1">
    <citation type="journal article" date="2004" name="Proc. Natl. Acad. Sci. U.S.A.">
        <title>The louse-borne human pathogen Bartonella quintana is a genomic derivative of the zoonotic agent Bartonella henselae.</title>
        <authorList>
            <person name="Alsmark U.C.M."/>
            <person name="Frank A.C."/>
            <person name="Karlberg E.O."/>
            <person name="Legault B.-A."/>
            <person name="Ardell D.H."/>
            <person name="Canbaeck B."/>
            <person name="Eriksson A.-S."/>
            <person name="Naeslund A.K."/>
            <person name="Handley S.A."/>
            <person name="Huvet M."/>
            <person name="La Scola B."/>
            <person name="Holmberg M."/>
            <person name="Andersson S.G.E."/>
        </authorList>
    </citation>
    <scope>NUCLEOTIDE SEQUENCE [LARGE SCALE GENOMIC DNA]</scope>
    <source>
        <strain>ATCC 49882 / DSM 28221 / CCUG 30454 / Houston 1</strain>
    </source>
</reference>
<accession>Q6G2Y0</accession>
<proteinExistence type="inferred from homology"/>